<proteinExistence type="evidence at protein level"/>
<dbReference type="EC" id="3.1.1.72"/>
<dbReference type="EMBL" id="DQ490499">
    <property type="protein sequence ID" value="ABF50875.1"/>
    <property type="molecule type" value="mRNA"/>
</dbReference>
<dbReference type="EMBL" id="AACD01000104">
    <property type="protein sequence ID" value="EAA58068.1"/>
    <property type="status" value="ALT_SEQ"/>
    <property type="molecule type" value="Genomic_DNA"/>
</dbReference>
<dbReference type="EMBL" id="BN001301">
    <property type="protein sequence ID" value="CBF70198.1"/>
    <property type="status" value="ALT_SEQ"/>
    <property type="molecule type" value="Genomic_DNA"/>
</dbReference>
<dbReference type="RefSeq" id="XP_663697.1">
    <property type="nucleotide sequence ID" value="XM_658605.1"/>
</dbReference>
<dbReference type="SMR" id="Q5B037"/>
<dbReference type="STRING" id="227321.Q5B037"/>
<dbReference type="ESTHER" id="emeni-axe1">
    <property type="family name" value="Esterase_phb"/>
</dbReference>
<dbReference type="GlyCosmos" id="Q5B037">
    <property type="glycosylation" value="1 site, No reported glycans"/>
</dbReference>
<dbReference type="KEGG" id="ani:ANIA_06093"/>
<dbReference type="VEuPathDB" id="FungiDB:AN6093"/>
<dbReference type="eggNOG" id="ENOG502QTDU">
    <property type="taxonomic scope" value="Eukaryota"/>
</dbReference>
<dbReference type="HOGENOM" id="CLU_027551_1_1_1"/>
<dbReference type="InParanoid" id="Q5B037"/>
<dbReference type="OrthoDB" id="2425929at2759"/>
<dbReference type="UniPathway" id="UPA00114"/>
<dbReference type="Proteomes" id="UP000000560">
    <property type="component" value="Chromosome I"/>
</dbReference>
<dbReference type="GO" id="GO:0005576">
    <property type="term" value="C:extracellular region"/>
    <property type="evidence" value="ECO:0007669"/>
    <property type="project" value="UniProtKB-SubCell"/>
</dbReference>
<dbReference type="GO" id="GO:0046555">
    <property type="term" value="F:acetylxylan esterase activity"/>
    <property type="evidence" value="ECO:0000314"/>
    <property type="project" value="UniProtKB"/>
</dbReference>
<dbReference type="GO" id="GO:0030245">
    <property type="term" value="P:cellulose catabolic process"/>
    <property type="evidence" value="ECO:0007669"/>
    <property type="project" value="UniProtKB-KW"/>
</dbReference>
<dbReference type="GO" id="GO:0045493">
    <property type="term" value="P:xylan catabolic process"/>
    <property type="evidence" value="ECO:0000314"/>
    <property type="project" value="UniProtKB"/>
</dbReference>
<dbReference type="FunFam" id="3.40.50.1820:FF:000203">
    <property type="entry name" value="Feruloyl esterase B"/>
    <property type="match status" value="1"/>
</dbReference>
<dbReference type="Gene3D" id="3.40.50.1820">
    <property type="entry name" value="alpha/beta hydrolase"/>
    <property type="match status" value="1"/>
</dbReference>
<dbReference type="InterPro" id="IPR029058">
    <property type="entry name" value="AB_hydrolase_fold"/>
</dbReference>
<dbReference type="InterPro" id="IPR010126">
    <property type="entry name" value="Esterase_phb"/>
</dbReference>
<dbReference type="InterPro" id="IPR050955">
    <property type="entry name" value="Plant_Biomass_Hydrol_Est"/>
</dbReference>
<dbReference type="NCBIfam" id="TIGR01840">
    <property type="entry name" value="esterase_phb"/>
    <property type="match status" value="1"/>
</dbReference>
<dbReference type="PANTHER" id="PTHR43037:SF3">
    <property type="entry name" value="FERULOYL ESTERASE B"/>
    <property type="match status" value="1"/>
</dbReference>
<dbReference type="PANTHER" id="PTHR43037">
    <property type="entry name" value="UNNAMED PRODUCT-RELATED"/>
    <property type="match status" value="1"/>
</dbReference>
<dbReference type="Pfam" id="PF10503">
    <property type="entry name" value="Esterase_PHB"/>
    <property type="match status" value="1"/>
</dbReference>
<dbReference type="SUPFAM" id="SSF53474">
    <property type="entry name" value="alpha/beta-Hydrolases"/>
    <property type="match status" value="2"/>
</dbReference>
<protein>
    <recommendedName>
        <fullName>Acetylxylan esterase A</fullName>
        <ecNumber>3.1.1.72</ecNumber>
    </recommendedName>
</protein>
<gene>
    <name type="primary">axeA</name>
    <name type="synonym">aceA</name>
    <name type="ORF">AN6093</name>
</gene>
<evidence type="ECO:0000250" key="1"/>
<evidence type="ECO:0000255" key="2"/>
<evidence type="ECO:0000269" key="3">
    <source>
    </source>
</evidence>
<evidence type="ECO:0000305" key="4"/>
<organism>
    <name type="scientific">Emericella nidulans (strain FGSC A4 / ATCC 38163 / CBS 112.46 / NRRL 194 / M139)</name>
    <name type="common">Aspergillus nidulans</name>
    <dbReference type="NCBI Taxonomy" id="227321"/>
    <lineage>
        <taxon>Eukaryota</taxon>
        <taxon>Fungi</taxon>
        <taxon>Dikarya</taxon>
        <taxon>Ascomycota</taxon>
        <taxon>Pezizomycotina</taxon>
        <taxon>Eurotiomycetes</taxon>
        <taxon>Eurotiomycetidae</taxon>
        <taxon>Eurotiales</taxon>
        <taxon>Aspergillaceae</taxon>
        <taxon>Aspergillus</taxon>
        <taxon>Aspergillus subgen. Nidulantes</taxon>
    </lineage>
</organism>
<feature type="signal peptide" evidence="2">
    <location>
        <begin position="1"/>
        <end position="19"/>
    </location>
</feature>
<feature type="chain" id="PRO_0000393482" description="Acetylxylan esterase A">
    <location>
        <begin position="20"/>
        <end position="304"/>
    </location>
</feature>
<feature type="active site" description="Charge relay system" evidence="1">
    <location>
        <position position="147"/>
    </location>
</feature>
<feature type="glycosylation site" description="N-linked (GlcNAc...) asparagine" evidence="2">
    <location>
        <position position="189"/>
    </location>
</feature>
<accession>Q5B037</accession>
<accession>C8V2L3</accession>
<accession>Q1HFS5</accession>
<sequence>MVKLQYLLSILLYAYSCTALMLDRRDPTPGQLSQVTDFGDNPTNVGFYIYVPQNLASNPAIIVAIHYCTGTAQAYYSGTPYAQYAETYGFIVIYPESPYSGTCWDVSSQSTLTHNGGGNSNSIANMVDWTINQYNADASRVYVTGTSSGAMMTNVMAATYPNLFAAGIAYAGVPAGCFYSEANVEDQWNSTCAQGQSISTPEHWAQIAQAMYSGYEGSRPKMQIYHGSADATLYPQNYYETCKQWAGVFGYNYDSPQEVQNDTPVAGWAKTIWGENLQGILADGVGHNIQIQGEEDLKWFGFTS</sequence>
<name>AXE1_EMENI</name>
<keyword id="KW-0119">Carbohydrate metabolism</keyword>
<keyword id="KW-0136">Cellulose degradation</keyword>
<keyword id="KW-0325">Glycoprotein</keyword>
<keyword id="KW-0378">Hydrolase</keyword>
<keyword id="KW-0624">Polysaccharide degradation</keyword>
<keyword id="KW-1185">Reference proteome</keyword>
<keyword id="KW-0964">Secreted</keyword>
<keyword id="KW-0719">Serine esterase</keyword>
<keyword id="KW-0732">Signal</keyword>
<reference key="1">
    <citation type="journal article" date="2006" name="Proc. Natl. Acad. Sci. U.S.A.">
        <title>Development and application of a suite of polysaccharide-degrading enzymes for analyzing plant cell walls.</title>
        <authorList>
            <person name="Bauer S."/>
            <person name="Vasu P."/>
            <person name="Persson S."/>
            <person name="Mort A.J."/>
            <person name="Somerville C.R."/>
        </authorList>
    </citation>
    <scope>NUCLEOTIDE SEQUENCE [MRNA]</scope>
    <scope>FUNCTION</scope>
    <scope>BIOPHYSICOCHEMICAL PROPERTIES</scope>
    <source>
        <strain>FGSC A4 / ATCC 38163 / CBS 112.46 / NRRL 194 / M139</strain>
    </source>
</reference>
<reference key="2">
    <citation type="journal article" date="2005" name="Nature">
        <title>Sequencing of Aspergillus nidulans and comparative analysis with A. fumigatus and A. oryzae.</title>
        <authorList>
            <person name="Galagan J.E."/>
            <person name="Calvo S.E."/>
            <person name="Cuomo C."/>
            <person name="Ma L.-J."/>
            <person name="Wortman J.R."/>
            <person name="Batzoglou S."/>
            <person name="Lee S.-I."/>
            <person name="Bastuerkmen M."/>
            <person name="Spevak C.C."/>
            <person name="Clutterbuck J."/>
            <person name="Kapitonov V."/>
            <person name="Jurka J."/>
            <person name="Scazzocchio C."/>
            <person name="Farman M.L."/>
            <person name="Butler J."/>
            <person name="Purcell S."/>
            <person name="Harris S."/>
            <person name="Braus G.H."/>
            <person name="Draht O."/>
            <person name="Busch S."/>
            <person name="D'Enfert C."/>
            <person name="Bouchier C."/>
            <person name="Goldman G.H."/>
            <person name="Bell-Pedersen D."/>
            <person name="Griffiths-Jones S."/>
            <person name="Doonan J.H."/>
            <person name="Yu J."/>
            <person name="Vienken K."/>
            <person name="Pain A."/>
            <person name="Freitag M."/>
            <person name="Selker E.U."/>
            <person name="Archer D.B."/>
            <person name="Penalva M.A."/>
            <person name="Oakley B.R."/>
            <person name="Momany M."/>
            <person name="Tanaka T."/>
            <person name="Kumagai T."/>
            <person name="Asai K."/>
            <person name="Machida M."/>
            <person name="Nierman W.C."/>
            <person name="Denning D.W."/>
            <person name="Caddick M.X."/>
            <person name="Hynes M."/>
            <person name="Paoletti M."/>
            <person name="Fischer R."/>
            <person name="Miller B.L."/>
            <person name="Dyer P.S."/>
            <person name="Sachs M.S."/>
            <person name="Osmani S.A."/>
            <person name="Birren B.W."/>
        </authorList>
    </citation>
    <scope>NUCLEOTIDE SEQUENCE [LARGE SCALE GENOMIC DNA]</scope>
    <source>
        <strain>FGSC A4 / ATCC 38163 / CBS 112.46 / NRRL 194 / M139</strain>
    </source>
</reference>
<reference key="3">
    <citation type="journal article" date="2009" name="Fungal Genet. Biol.">
        <title>The 2008 update of the Aspergillus nidulans genome annotation: a community effort.</title>
        <authorList>
            <person name="Wortman J.R."/>
            <person name="Gilsenan J.M."/>
            <person name="Joardar V."/>
            <person name="Deegan J."/>
            <person name="Clutterbuck J."/>
            <person name="Andersen M.R."/>
            <person name="Archer D."/>
            <person name="Bencina M."/>
            <person name="Braus G."/>
            <person name="Coutinho P."/>
            <person name="von Dohren H."/>
            <person name="Doonan J."/>
            <person name="Driessen A.J."/>
            <person name="Durek P."/>
            <person name="Espeso E."/>
            <person name="Fekete E."/>
            <person name="Flipphi M."/>
            <person name="Estrada C.G."/>
            <person name="Geysens S."/>
            <person name="Goldman G."/>
            <person name="de Groot P.W."/>
            <person name="Hansen K."/>
            <person name="Harris S.D."/>
            <person name="Heinekamp T."/>
            <person name="Helmstaedt K."/>
            <person name="Henrissat B."/>
            <person name="Hofmann G."/>
            <person name="Homan T."/>
            <person name="Horio T."/>
            <person name="Horiuchi H."/>
            <person name="James S."/>
            <person name="Jones M."/>
            <person name="Karaffa L."/>
            <person name="Karanyi Z."/>
            <person name="Kato M."/>
            <person name="Keller N."/>
            <person name="Kelly D.E."/>
            <person name="Kiel J.A."/>
            <person name="Kim J.M."/>
            <person name="van der Klei I.J."/>
            <person name="Klis F.M."/>
            <person name="Kovalchuk A."/>
            <person name="Krasevec N."/>
            <person name="Kubicek C.P."/>
            <person name="Liu B."/>
            <person name="Maccabe A."/>
            <person name="Meyer V."/>
            <person name="Mirabito P."/>
            <person name="Miskei M."/>
            <person name="Mos M."/>
            <person name="Mullins J."/>
            <person name="Nelson D.R."/>
            <person name="Nielsen J."/>
            <person name="Oakley B.R."/>
            <person name="Osmani S.A."/>
            <person name="Pakula T."/>
            <person name="Paszewski A."/>
            <person name="Paulsen I."/>
            <person name="Pilsyk S."/>
            <person name="Pocsi I."/>
            <person name="Punt P.J."/>
            <person name="Ram A.F."/>
            <person name="Ren Q."/>
            <person name="Robellet X."/>
            <person name="Robson G."/>
            <person name="Seiboth B."/>
            <person name="van Solingen P."/>
            <person name="Specht T."/>
            <person name="Sun J."/>
            <person name="Taheri-Talesh N."/>
            <person name="Takeshita N."/>
            <person name="Ussery D."/>
            <person name="vanKuyk P.A."/>
            <person name="Visser H."/>
            <person name="van de Vondervoort P.J."/>
            <person name="de Vries R.P."/>
            <person name="Walton J."/>
            <person name="Xiang X."/>
            <person name="Xiong Y."/>
            <person name="Zeng A.P."/>
            <person name="Brandt B.W."/>
            <person name="Cornell M.J."/>
            <person name="van den Hondel C.A."/>
            <person name="Visser J."/>
            <person name="Oliver S.G."/>
            <person name="Turner G."/>
        </authorList>
    </citation>
    <scope>GENOME REANNOTATION</scope>
    <source>
        <strain>FGSC A4 / ATCC 38163 / CBS 112.46 / NRRL 194 / M139</strain>
    </source>
</reference>
<comment type="function">
    <text evidence="3">Acetylxylan esterase involved in the hydrolysis of xylan, a major structural heterogeneous polysaccharide found in plant biomass representing the second most abundant polysaccharide in the biosphere, after cellulose. Degrades acetylated xylans by cleaving acetyl side groups from the hetero-xylan backbone.</text>
</comment>
<comment type="catalytic activity">
    <reaction>
        <text>Deacetylation of xylans and xylo-oligosaccharides.</text>
        <dbReference type="EC" id="3.1.1.72"/>
    </reaction>
</comment>
<comment type="biophysicochemical properties">
    <phDependence>
        <text evidence="3">Optimum pH is 7.5.</text>
    </phDependence>
    <temperatureDependence>
        <text evidence="3">Optimum temperature is 49 degrees Celsius.</text>
    </temperatureDependence>
</comment>
<comment type="pathway">
    <text>Glycan degradation; xylan degradation.</text>
</comment>
<comment type="subunit">
    <text evidence="1">Monomer.</text>
</comment>
<comment type="subcellular location">
    <subcellularLocation>
        <location evidence="1">Secreted</location>
    </subcellularLocation>
</comment>
<comment type="similarity">
    <text evidence="4">Belongs to the carbohydrate esterase 1 (CE1) family. AxeA subfamily.</text>
</comment>
<comment type="caution">
    <text evidence="4">The C-terminal carbohydrate-binding module (CBM) extension found in some acetylxylan esterases from other species is absent.</text>
</comment>
<comment type="sequence caution" evidence="4">
    <conflict type="erroneous gene model prediction">
        <sequence resource="EMBL-CDS" id="CBF70198"/>
    </conflict>
</comment>
<comment type="sequence caution" evidence="4">
    <conflict type="erroneous gene model prediction">
        <sequence resource="EMBL-CDS" id="EAA58068"/>
    </conflict>
</comment>